<accession>P57484</accession>
<name>CSRA_BUCAI</name>
<dbReference type="EMBL" id="BA000003">
    <property type="protein sequence ID" value="BAB13107.1"/>
    <property type="molecule type" value="Genomic_DNA"/>
</dbReference>
<dbReference type="RefSeq" id="NP_240221.1">
    <property type="nucleotide sequence ID" value="NC_002528.1"/>
</dbReference>
<dbReference type="RefSeq" id="WP_009874362.1">
    <property type="nucleotide sequence ID" value="NZ_AP036055.1"/>
</dbReference>
<dbReference type="SMR" id="P57484"/>
<dbReference type="STRING" id="563178.BUAP5A_397"/>
<dbReference type="EnsemblBacteria" id="BAB13107">
    <property type="protein sequence ID" value="BAB13107"/>
    <property type="gene ID" value="BAB13107"/>
</dbReference>
<dbReference type="KEGG" id="buc:BU404"/>
<dbReference type="PATRIC" id="fig|107806.10.peg.418"/>
<dbReference type="eggNOG" id="COG1551">
    <property type="taxonomic scope" value="Bacteria"/>
</dbReference>
<dbReference type="HOGENOM" id="CLU_164837_2_1_6"/>
<dbReference type="Proteomes" id="UP000001806">
    <property type="component" value="Chromosome"/>
</dbReference>
<dbReference type="GO" id="GO:0005829">
    <property type="term" value="C:cytosol"/>
    <property type="evidence" value="ECO:0007669"/>
    <property type="project" value="TreeGrafter"/>
</dbReference>
<dbReference type="GO" id="GO:0048027">
    <property type="term" value="F:mRNA 5'-UTR binding"/>
    <property type="evidence" value="ECO:0007669"/>
    <property type="project" value="UniProtKB-UniRule"/>
</dbReference>
<dbReference type="GO" id="GO:0006402">
    <property type="term" value="P:mRNA catabolic process"/>
    <property type="evidence" value="ECO:0007669"/>
    <property type="project" value="InterPro"/>
</dbReference>
<dbReference type="GO" id="GO:0045947">
    <property type="term" value="P:negative regulation of translational initiation"/>
    <property type="evidence" value="ECO:0007669"/>
    <property type="project" value="UniProtKB-UniRule"/>
</dbReference>
<dbReference type="GO" id="GO:0045948">
    <property type="term" value="P:positive regulation of translational initiation"/>
    <property type="evidence" value="ECO:0007669"/>
    <property type="project" value="UniProtKB-UniRule"/>
</dbReference>
<dbReference type="GO" id="GO:0006109">
    <property type="term" value="P:regulation of carbohydrate metabolic process"/>
    <property type="evidence" value="ECO:0007669"/>
    <property type="project" value="UniProtKB-UniRule"/>
</dbReference>
<dbReference type="FunFam" id="2.60.40.4380:FF:000001">
    <property type="entry name" value="Translational regulator CsrA"/>
    <property type="match status" value="1"/>
</dbReference>
<dbReference type="Gene3D" id="2.60.40.4380">
    <property type="entry name" value="Translational regulator CsrA"/>
    <property type="match status" value="1"/>
</dbReference>
<dbReference type="HAMAP" id="MF_00167">
    <property type="entry name" value="CsrA"/>
    <property type="match status" value="1"/>
</dbReference>
<dbReference type="InterPro" id="IPR003751">
    <property type="entry name" value="CsrA"/>
</dbReference>
<dbReference type="InterPro" id="IPR036107">
    <property type="entry name" value="CsrA_sf"/>
</dbReference>
<dbReference type="NCBIfam" id="TIGR00202">
    <property type="entry name" value="csrA"/>
    <property type="match status" value="1"/>
</dbReference>
<dbReference type="NCBIfam" id="NF002469">
    <property type="entry name" value="PRK01712.1"/>
    <property type="match status" value="1"/>
</dbReference>
<dbReference type="PANTHER" id="PTHR34984">
    <property type="entry name" value="CARBON STORAGE REGULATOR"/>
    <property type="match status" value="1"/>
</dbReference>
<dbReference type="PANTHER" id="PTHR34984:SF1">
    <property type="entry name" value="CARBON STORAGE REGULATOR"/>
    <property type="match status" value="1"/>
</dbReference>
<dbReference type="Pfam" id="PF02599">
    <property type="entry name" value="CsrA"/>
    <property type="match status" value="1"/>
</dbReference>
<dbReference type="SUPFAM" id="SSF117130">
    <property type="entry name" value="CsrA-like"/>
    <property type="match status" value="1"/>
</dbReference>
<gene>
    <name evidence="1" type="primary">csrA</name>
    <name type="ordered locus">BU404</name>
</gene>
<evidence type="ECO:0000255" key="1">
    <source>
        <dbReference type="HAMAP-Rule" id="MF_00167"/>
    </source>
</evidence>
<feature type="chain" id="PRO_0000177052" description="Translational regulator CsrA">
    <location>
        <begin position="1"/>
        <end position="57"/>
    </location>
</feature>
<protein>
    <recommendedName>
        <fullName evidence="1">Translational regulator CsrA</fullName>
    </recommendedName>
    <alternativeName>
        <fullName evidence="1">Carbon storage regulator</fullName>
    </alternativeName>
</protein>
<organism>
    <name type="scientific">Buchnera aphidicola subsp. Acyrthosiphon pisum (strain APS)</name>
    <name type="common">Acyrthosiphon pisum symbiotic bacterium</name>
    <dbReference type="NCBI Taxonomy" id="107806"/>
    <lineage>
        <taxon>Bacteria</taxon>
        <taxon>Pseudomonadati</taxon>
        <taxon>Pseudomonadota</taxon>
        <taxon>Gammaproteobacteria</taxon>
        <taxon>Enterobacterales</taxon>
        <taxon>Erwiniaceae</taxon>
        <taxon>Buchnera</taxon>
    </lineage>
</organism>
<keyword id="KW-0010">Activator</keyword>
<keyword id="KW-0963">Cytoplasm</keyword>
<keyword id="KW-1185">Reference proteome</keyword>
<keyword id="KW-0678">Repressor</keyword>
<keyword id="KW-0694">RNA-binding</keyword>
<keyword id="KW-0810">Translation regulation</keyword>
<comment type="function">
    <text evidence="1">A key translational regulator that binds mRNA to regulate translation initiation and/or mRNA stability. Mediates global changes in gene expression, shifting from rapid growth to stress survival by linking envelope stress, the stringent response and the catabolite repression systems. Usually binds in the 5'-UTR; binding at or near the Shine-Dalgarno sequence prevents ribosome-binding, repressing translation, binding elsewhere in the 5'-UTR can activate translation and/or stabilize the mRNA. Its function is antagonized by small RNA(s).</text>
</comment>
<comment type="subunit">
    <text evidence="1">Homodimer; the beta-strands of each monomer intercalate to form a hydrophobic core, while the alpha-helices form wings that extend away from the core.</text>
</comment>
<comment type="subcellular location">
    <subcellularLocation>
        <location evidence="1">Cytoplasm</location>
    </subcellularLocation>
</comment>
<comment type="similarity">
    <text evidence="1">Belongs to the CsrA/RsmA family.</text>
</comment>
<sequence>MLILTRRVGETLIIGDEITVTVLGVKGNQVRIGVNAPKEVSVHREEIYQRIQAEKKK</sequence>
<reference key="1">
    <citation type="journal article" date="2000" name="Nature">
        <title>Genome sequence of the endocellular bacterial symbiont of aphids Buchnera sp. APS.</title>
        <authorList>
            <person name="Shigenobu S."/>
            <person name="Watanabe H."/>
            <person name="Hattori M."/>
            <person name="Sakaki Y."/>
            <person name="Ishikawa H."/>
        </authorList>
    </citation>
    <scope>NUCLEOTIDE SEQUENCE [LARGE SCALE GENOMIC DNA]</scope>
    <source>
        <strain>APS</strain>
    </source>
</reference>
<proteinExistence type="inferred from homology"/>